<reference key="1">
    <citation type="journal article" date="2001" name="Lancet">
        <title>Whole genome sequencing of meticillin-resistant Staphylococcus aureus.</title>
        <authorList>
            <person name="Kuroda M."/>
            <person name="Ohta T."/>
            <person name="Uchiyama I."/>
            <person name="Baba T."/>
            <person name="Yuzawa H."/>
            <person name="Kobayashi I."/>
            <person name="Cui L."/>
            <person name="Oguchi A."/>
            <person name="Aoki K."/>
            <person name="Nagai Y."/>
            <person name="Lian J.-Q."/>
            <person name="Ito T."/>
            <person name="Kanamori M."/>
            <person name="Matsumaru H."/>
            <person name="Maruyama A."/>
            <person name="Murakami H."/>
            <person name="Hosoyama A."/>
            <person name="Mizutani-Ui Y."/>
            <person name="Takahashi N.K."/>
            <person name="Sawano T."/>
            <person name="Inoue R."/>
            <person name="Kaito C."/>
            <person name="Sekimizu K."/>
            <person name="Hirakawa H."/>
            <person name="Kuhara S."/>
            <person name="Goto S."/>
            <person name="Yabuzaki J."/>
            <person name="Kanehisa M."/>
            <person name="Yamashita A."/>
            <person name="Oshima K."/>
            <person name="Furuya K."/>
            <person name="Yoshino C."/>
            <person name="Shiba T."/>
            <person name="Hattori M."/>
            <person name="Ogasawara N."/>
            <person name="Hayashi H."/>
            <person name="Hiramatsu K."/>
        </authorList>
    </citation>
    <scope>NUCLEOTIDE SEQUENCE [LARGE SCALE GENOMIC DNA]</scope>
    <source>
        <strain>N315</strain>
    </source>
</reference>
<reference key="2">
    <citation type="submission" date="2007-10" db="UniProtKB">
        <title>Shotgun proteomic analysis of total and membrane protein extracts of S. aureus strain N315.</title>
        <authorList>
            <person name="Vaezzadeh A.R."/>
            <person name="Deshusses J."/>
            <person name="Lescuyer P."/>
            <person name="Hochstrasser D.F."/>
        </authorList>
    </citation>
    <scope>IDENTIFICATION BY MASS SPECTROMETRY [LARGE SCALE ANALYSIS]</scope>
    <source>
        <strain>N315</strain>
    </source>
</reference>
<organism>
    <name type="scientific">Staphylococcus aureus (strain N315)</name>
    <dbReference type="NCBI Taxonomy" id="158879"/>
    <lineage>
        <taxon>Bacteria</taxon>
        <taxon>Bacillati</taxon>
        <taxon>Bacillota</taxon>
        <taxon>Bacilli</taxon>
        <taxon>Bacillales</taxon>
        <taxon>Staphylococcaceae</taxon>
        <taxon>Staphylococcus</taxon>
    </lineage>
</organism>
<name>MUTL_STAAN</name>
<evidence type="ECO:0000255" key="1">
    <source>
        <dbReference type="HAMAP-Rule" id="MF_00149"/>
    </source>
</evidence>
<evidence type="ECO:0000256" key="2">
    <source>
        <dbReference type="SAM" id="MobiDB-lite"/>
    </source>
</evidence>
<keyword id="KW-0227">DNA damage</keyword>
<keyword id="KW-0234">DNA repair</keyword>
<proteinExistence type="evidence at protein level"/>
<feature type="chain" id="PRO_0000177970" description="DNA mismatch repair protein MutL">
    <location>
        <begin position="1"/>
        <end position="669"/>
    </location>
</feature>
<feature type="region of interest" description="Disordered" evidence="2">
    <location>
        <begin position="357"/>
        <end position="379"/>
    </location>
</feature>
<feature type="compositionally biased region" description="Polar residues" evidence="2">
    <location>
        <begin position="361"/>
        <end position="379"/>
    </location>
</feature>
<sequence length="669" mass="76871">MGKIKELQTSLANKIAAGEVVERPSSVVKELLENAIDAGATEISIEVEESGVQSIRVVDNGSGIEAEDLGLVFHRHATSKLDQDEDLFHIRTLGFRGEALASISSVAKVTLKTCTDNANGNEIYVENGEILNHKPAKAKKGTDILVESLFYNTPARLKYIKSLYTELGKITDIVNRMAMSHPDIRIALISDGKTMLSTNGSGRTNEVMAEIYGMKVARDLVHISGDTSDYHIEGFVAKPEHSRSNKHYISIFINGRYIKNFMLNKAILEGYHTLLTIGRFPICYINIEMDPILVDVNVHPTKLEVRLSKEEQLYQLIVSKIQEAFKDRILIPKNNLDYVPKKNKVLYSFEQQKIEFEQRQNTENNQEKTFSSEESNSKSFMAENQNDEIVIKEDSYNPFVTKTSESLITDDESSGYNNTREKDEDYFKKQQEILQEMDQTFDSNEDASVQNYENKASDDYYDVNDIKGTKSKDPKRRIPYMEIVGQVHGTYIIAQNEFGMYMIDQHAAQERIKYEYFRDKIGEVTNEVQDLLIPLTFHFSKDEQLVIDQYKNELQQVGIMLEHFGGHDYIVSSYPVWFPKDEVEEIIKDMIELILEEKKVDIKKLREDVAIMMSCKKSIKANHYLQKHEMSDLIDQLREAEDPFTCPHGRPIIINFSKYELEKLFKRVM</sequence>
<gene>
    <name evidence="1" type="primary">mutL</name>
    <name type="ordered locus">SA1138</name>
</gene>
<comment type="function">
    <text evidence="1">This protein is involved in the repair of mismatches in DNA. It is required for dam-dependent methyl-directed DNA mismatch repair. May act as a 'molecular matchmaker', a protein that promotes the formation of a stable complex between two or more DNA-binding proteins in an ATP-dependent manner without itself being part of a final effector complex.</text>
</comment>
<comment type="similarity">
    <text evidence="1">Belongs to the DNA mismatch repair MutL/HexB family.</text>
</comment>
<protein>
    <recommendedName>
        <fullName evidence="1">DNA mismatch repair protein MutL</fullName>
    </recommendedName>
</protein>
<dbReference type="EMBL" id="BA000018">
    <property type="protein sequence ID" value="BAB42391.1"/>
    <property type="molecule type" value="Genomic_DNA"/>
</dbReference>
<dbReference type="PIR" id="C89904">
    <property type="entry name" value="C89904"/>
</dbReference>
<dbReference type="RefSeq" id="WP_000516269.1">
    <property type="nucleotide sequence ID" value="NC_002745.2"/>
</dbReference>
<dbReference type="SMR" id="P65492"/>
<dbReference type="EnsemblBacteria" id="BAB42391">
    <property type="protein sequence ID" value="BAB42391"/>
    <property type="gene ID" value="BAB42391"/>
</dbReference>
<dbReference type="KEGG" id="sau:SA1138"/>
<dbReference type="HOGENOM" id="CLU_004131_4_1_9"/>
<dbReference type="GO" id="GO:0032300">
    <property type="term" value="C:mismatch repair complex"/>
    <property type="evidence" value="ECO:0007669"/>
    <property type="project" value="InterPro"/>
</dbReference>
<dbReference type="GO" id="GO:0005524">
    <property type="term" value="F:ATP binding"/>
    <property type="evidence" value="ECO:0007669"/>
    <property type="project" value="InterPro"/>
</dbReference>
<dbReference type="GO" id="GO:0016887">
    <property type="term" value="F:ATP hydrolysis activity"/>
    <property type="evidence" value="ECO:0007669"/>
    <property type="project" value="InterPro"/>
</dbReference>
<dbReference type="GO" id="GO:0140664">
    <property type="term" value="F:ATP-dependent DNA damage sensor activity"/>
    <property type="evidence" value="ECO:0007669"/>
    <property type="project" value="InterPro"/>
</dbReference>
<dbReference type="GO" id="GO:0030983">
    <property type="term" value="F:mismatched DNA binding"/>
    <property type="evidence" value="ECO:0007669"/>
    <property type="project" value="InterPro"/>
</dbReference>
<dbReference type="GO" id="GO:0006298">
    <property type="term" value="P:mismatch repair"/>
    <property type="evidence" value="ECO:0007669"/>
    <property type="project" value="UniProtKB-UniRule"/>
</dbReference>
<dbReference type="CDD" id="cd16926">
    <property type="entry name" value="HATPase_MutL-MLH-PMS-like"/>
    <property type="match status" value="1"/>
</dbReference>
<dbReference type="CDD" id="cd00782">
    <property type="entry name" value="MutL_Trans"/>
    <property type="match status" value="1"/>
</dbReference>
<dbReference type="FunFam" id="3.30.1370.100:FF:000004">
    <property type="entry name" value="DNA mismatch repair endonuclease MutL"/>
    <property type="match status" value="1"/>
</dbReference>
<dbReference type="FunFam" id="3.30.230.10:FF:000036">
    <property type="entry name" value="DNA mismatch repair endonuclease MutL"/>
    <property type="match status" value="1"/>
</dbReference>
<dbReference type="FunFam" id="3.30.565.10:FF:000003">
    <property type="entry name" value="DNA mismatch repair endonuclease MutL"/>
    <property type="match status" value="1"/>
</dbReference>
<dbReference type="Gene3D" id="3.30.230.10">
    <property type="match status" value="1"/>
</dbReference>
<dbReference type="Gene3D" id="3.30.565.10">
    <property type="entry name" value="Histidine kinase-like ATPase, C-terminal domain"/>
    <property type="match status" value="1"/>
</dbReference>
<dbReference type="Gene3D" id="3.30.1540.20">
    <property type="entry name" value="MutL, C-terminal domain, dimerisation subdomain"/>
    <property type="match status" value="1"/>
</dbReference>
<dbReference type="Gene3D" id="3.30.1370.100">
    <property type="entry name" value="MutL, C-terminal domain, regulatory subdomain"/>
    <property type="match status" value="1"/>
</dbReference>
<dbReference type="HAMAP" id="MF_00149">
    <property type="entry name" value="DNA_mis_repair"/>
    <property type="match status" value="1"/>
</dbReference>
<dbReference type="InterPro" id="IPR014762">
    <property type="entry name" value="DNA_mismatch_repair_CS"/>
</dbReference>
<dbReference type="InterPro" id="IPR020667">
    <property type="entry name" value="DNA_mismatch_repair_MutL"/>
</dbReference>
<dbReference type="InterPro" id="IPR013507">
    <property type="entry name" value="DNA_mismatch_S5_2-like"/>
</dbReference>
<dbReference type="InterPro" id="IPR036890">
    <property type="entry name" value="HATPase_C_sf"/>
</dbReference>
<dbReference type="InterPro" id="IPR002099">
    <property type="entry name" value="MutL/Mlh/PMS"/>
</dbReference>
<dbReference type="InterPro" id="IPR038973">
    <property type="entry name" value="MutL/Mlh/Pms-like"/>
</dbReference>
<dbReference type="InterPro" id="IPR014790">
    <property type="entry name" value="MutL_C"/>
</dbReference>
<dbReference type="InterPro" id="IPR042120">
    <property type="entry name" value="MutL_C_dimsub"/>
</dbReference>
<dbReference type="InterPro" id="IPR042121">
    <property type="entry name" value="MutL_C_regsub"/>
</dbReference>
<dbReference type="InterPro" id="IPR037198">
    <property type="entry name" value="MutL_C_sf"/>
</dbReference>
<dbReference type="InterPro" id="IPR020568">
    <property type="entry name" value="Ribosomal_Su5_D2-typ_SF"/>
</dbReference>
<dbReference type="InterPro" id="IPR014721">
    <property type="entry name" value="Ribsml_uS5_D2-typ_fold_subgr"/>
</dbReference>
<dbReference type="NCBIfam" id="TIGR00585">
    <property type="entry name" value="mutl"/>
    <property type="match status" value="1"/>
</dbReference>
<dbReference type="NCBIfam" id="NF000950">
    <property type="entry name" value="PRK00095.1-3"/>
    <property type="match status" value="1"/>
</dbReference>
<dbReference type="PANTHER" id="PTHR10073">
    <property type="entry name" value="DNA MISMATCH REPAIR PROTEIN MLH, PMS, MUTL"/>
    <property type="match status" value="1"/>
</dbReference>
<dbReference type="PANTHER" id="PTHR10073:SF12">
    <property type="entry name" value="DNA MISMATCH REPAIR PROTEIN MLH1"/>
    <property type="match status" value="1"/>
</dbReference>
<dbReference type="Pfam" id="PF01119">
    <property type="entry name" value="DNA_mis_repair"/>
    <property type="match status" value="1"/>
</dbReference>
<dbReference type="Pfam" id="PF13589">
    <property type="entry name" value="HATPase_c_3"/>
    <property type="match status" value="1"/>
</dbReference>
<dbReference type="Pfam" id="PF08676">
    <property type="entry name" value="MutL_C"/>
    <property type="match status" value="1"/>
</dbReference>
<dbReference type="SMART" id="SM01340">
    <property type="entry name" value="DNA_mis_repair"/>
    <property type="match status" value="1"/>
</dbReference>
<dbReference type="SMART" id="SM00853">
    <property type="entry name" value="MutL_C"/>
    <property type="match status" value="1"/>
</dbReference>
<dbReference type="SUPFAM" id="SSF55874">
    <property type="entry name" value="ATPase domain of HSP90 chaperone/DNA topoisomerase II/histidine kinase"/>
    <property type="match status" value="1"/>
</dbReference>
<dbReference type="SUPFAM" id="SSF118116">
    <property type="entry name" value="DNA mismatch repair protein MutL"/>
    <property type="match status" value="1"/>
</dbReference>
<dbReference type="SUPFAM" id="SSF54211">
    <property type="entry name" value="Ribosomal protein S5 domain 2-like"/>
    <property type="match status" value="1"/>
</dbReference>
<dbReference type="PROSITE" id="PS00058">
    <property type="entry name" value="DNA_MISMATCH_REPAIR_1"/>
    <property type="match status" value="1"/>
</dbReference>
<accession>P65492</accession>
<accession>Q99UH7</accession>